<comment type="function">
    <text evidence="1">Involved in the binding of tRNA to the ribosomes.</text>
</comment>
<comment type="subunit">
    <text evidence="1">Part of the 30S ribosomal subunit.</text>
</comment>
<comment type="similarity">
    <text evidence="1">Belongs to the universal ribosomal protein uS10 family.</text>
</comment>
<name>RS10_MYCCT</name>
<accession>P10129</accession>
<accession>Q2SRF2</accession>
<keyword id="KW-0687">Ribonucleoprotein</keyword>
<keyword id="KW-0689">Ribosomal protein</keyword>
<feature type="chain" id="PRO_0000146550" description="Small ribosomal subunit protein uS10">
    <location>
        <begin position="1"/>
        <end position="102"/>
    </location>
</feature>
<dbReference type="EMBL" id="X06414">
    <property type="protein sequence ID" value="CAA29703.1"/>
    <property type="molecule type" value="Genomic_DNA"/>
</dbReference>
<dbReference type="EMBL" id="CP000123">
    <property type="protein sequence ID" value="ABC01843.1"/>
    <property type="molecule type" value="Genomic_DNA"/>
</dbReference>
<dbReference type="PIR" id="S02830">
    <property type="entry name" value="R3YM10"/>
</dbReference>
<dbReference type="RefSeq" id="WP_011387545.1">
    <property type="nucleotide sequence ID" value="NC_007633.1"/>
</dbReference>
<dbReference type="SMR" id="P10129"/>
<dbReference type="GeneID" id="23778349"/>
<dbReference type="KEGG" id="mcp:MCAP_0697"/>
<dbReference type="HOGENOM" id="CLU_122625_1_3_14"/>
<dbReference type="PhylomeDB" id="P10129"/>
<dbReference type="Proteomes" id="UP000001928">
    <property type="component" value="Chromosome"/>
</dbReference>
<dbReference type="GO" id="GO:1990904">
    <property type="term" value="C:ribonucleoprotein complex"/>
    <property type="evidence" value="ECO:0007669"/>
    <property type="project" value="UniProtKB-KW"/>
</dbReference>
<dbReference type="GO" id="GO:0005840">
    <property type="term" value="C:ribosome"/>
    <property type="evidence" value="ECO:0007669"/>
    <property type="project" value="UniProtKB-KW"/>
</dbReference>
<dbReference type="GO" id="GO:0003735">
    <property type="term" value="F:structural constituent of ribosome"/>
    <property type="evidence" value="ECO:0007669"/>
    <property type="project" value="InterPro"/>
</dbReference>
<dbReference type="GO" id="GO:0000049">
    <property type="term" value="F:tRNA binding"/>
    <property type="evidence" value="ECO:0007669"/>
    <property type="project" value="UniProtKB-UniRule"/>
</dbReference>
<dbReference type="GO" id="GO:0006412">
    <property type="term" value="P:translation"/>
    <property type="evidence" value="ECO:0007669"/>
    <property type="project" value="UniProtKB-UniRule"/>
</dbReference>
<dbReference type="FunFam" id="3.30.70.600:FF:000003">
    <property type="entry name" value="30S ribosomal protein S10"/>
    <property type="match status" value="1"/>
</dbReference>
<dbReference type="Gene3D" id="3.30.70.600">
    <property type="entry name" value="Ribosomal protein S10 domain"/>
    <property type="match status" value="1"/>
</dbReference>
<dbReference type="HAMAP" id="MF_00508">
    <property type="entry name" value="Ribosomal_uS10"/>
    <property type="match status" value="1"/>
</dbReference>
<dbReference type="InterPro" id="IPR001848">
    <property type="entry name" value="Ribosomal_uS10"/>
</dbReference>
<dbReference type="InterPro" id="IPR018268">
    <property type="entry name" value="Ribosomal_uS10_CS"/>
</dbReference>
<dbReference type="InterPro" id="IPR027486">
    <property type="entry name" value="Ribosomal_uS10_dom"/>
</dbReference>
<dbReference type="InterPro" id="IPR036838">
    <property type="entry name" value="Ribosomal_uS10_dom_sf"/>
</dbReference>
<dbReference type="NCBIfam" id="NF001861">
    <property type="entry name" value="PRK00596.1"/>
    <property type="match status" value="1"/>
</dbReference>
<dbReference type="NCBIfam" id="TIGR01049">
    <property type="entry name" value="rpsJ_bact"/>
    <property type="match status" value="1"/>
</dbReference>
<dbReference type="PANTHER" id="PTHR11700">
    <property type="entry name" value="30S RIBOSOMAL PROTEIN S10 FAMILY MEMBER"/>
    <property type="match status" value="1"/>
</dbReference>
<dbReference type="Pfam" id="PF00338">
    <property type="entry name" value="Ribosomal_S10"/>
    <property type="match status" value="1"/>
</dbReference>
<dbReference type="PRINTS" id="PR00971">
    <property type="entry name" value="RIBOSOMALS10"/>
</dbReference>
<dbReference type="SMART" id="SM01403">
    <property type="entry name" value="Ribosomal_S10"/>
    <property type="match status" value="1"/>
</dbReference>
<dbReference type="SUPFAM" id="SSF54999">
    <property type="entry name" value="Ribosomal protein S10"/>
    <property type="match status" value="1"/>
</dbReference>
<dbReference type="PROSITE" id="PS00361">
    <property type="entry name" value="RIBOSOMAL_S10"/>
    <property type="match status" value="1"/>
</dbReference>
<gene>
    <name evidence="1" type="primary">rpsJ</name>
    <name type="ordered locus">MCAP_0697</name>
</gene>
<proteinExistence type="inferred from homology"/>
<reference key="1">
    <citation type="journal article" date="1987" name="Mol. Gen. Genet.">
        <title>The ribosomal protein gene cluster of Mycoplasma capricolum.</title>
        <authorList>
            <person name="Ohkubo S."/>
            <person name="Muto A."/>
            <person name="Kawauchi Y."/>
            <person name="Yamao F."/>
            <person name="Osawa S."/>
        </authorList>
    </citation>
    <scope>NUCLEOTIDE SEQUENCE [GENOMIC DNA]</scope>
</reference>
<reference key="2">
    <citation type="submission" date="2005-09" db="EMBL/GenBank/DDBJ databases">
        <authorList>
            <person name="Glass J.I."/>
            <person name="Lartigue C."/>
            <person name="Pfannkoch C."/>
            <person name="Baden-Tillson H."/>
            <person name="Smith H.O."/>
            <person name="Venter J.C."/>
            <person name="Roske K."/>
            <person name="Wise K.S."/>
            <person name="Calcutt M.J."/>
            <person name="Nelson W.C."/>
            <person name="Nierman W.C."/>
        </authorList>
    </citation>
    <scope>NUCLEOTIDE SEQUENCE [LARGE SCALE GENOMIC DNA]</scope>
    <source>
        <strain>California kid / ATCC 27343 / NCTC 10154</strain>
    </source>
</reference>
<evidence type="ECO:0000255" key="1">
    <source>
        <dbReference type="HAMAP-Rule" id="MF_00508"/>
    </source>
</evidence>
<evidence type="ECO:0000305" key="2"/>
<protein>
    <recommendedName>
        <fullName evidence="1">Small ribosomal subunit protein uS10</fullName>
    </recommendedName>
    <alternativeName>
        <fullName evidence="2">30S ribosomal protein S10</fullName>
    </alternativeName>
</protein>
<sequence>MAENKMRIKLKGYDHAIVDQSITKIIQAAEGTGAKVRGPIPLPTEKQVITILRAVHKYKDSREQFEMRTHKRLLEILNPTAATMDVLKRVQLPSGVDIEIKL</sequence>
<organism>
    <name type="scientific">Mycoplasma capricolum subsp. capricolum (strain California kid / ATCC 27343 / NCTC 10154)</name>
    <dbReference type="NCBI Taxonomy" id="340047"/>
    <lineage>
        <taxon>Bacteria</taxon>
        <taxon>Bacillati</taxon>
        <taxon>Mycoplasmatota</taxon>
        <taxon>Mollicutes</taxon>
        <taxon>Mycoplasmataceae</taxon>
        <taxon>Mycoplasma</taxon>
    </lineage>
</organism>